<sequence length="80" mass="8950">MAQKSLANNSINLPYKDLTSEVTRRRVTMITRKEIITQKSDEAKEMLSHLDLEQAPPPHRTYLTVPPAPPPSPAEDPTVS</sequence>
<accession>A0A1B0GUC4</accession>
<accession>A0A1B0GTE5</accession>
<feature type="chain" id="PRO_0000442229" description="Myocilin opposite strand protein">
    <location>
        <begin position="1"/>
        <end position="80"/>
    </location>
</feature>
<feature type="region of interest" description="Disordered" evidence="1">
    <location>
        <begin position="53"/>
        <end position="80"/>
    </location>
</feature>
<organism>
    <name type="scientific">Homo sapiens</name>
    <name type="common">Human</name>
    <dbReference type="NCBI Taxonomy" id="9606"/>
    <lineage>
        <taxon>Eukaryota</taxon>
        <taxon>Metazoa</taxon>
        <taxon>Chordata</taxon>
        <taxon>Craniata</taxon>
        <taxon>Vertebrata</taxon>
        <taxon>Euteleostomi</taxon>
        <taxon>Mammalia</taxon>
        <taxon>Eutheria</taxon>
        <taxon>Euarchontoglires</taxon>
        <taxon>Primates</taxon>
        <taxon>Haplorrhini</taxon>
        <taxon>Catarrhini</taxon>
        <taxon>Hominidae</taxon>
        <taxon>Homo</taxon>
    </lineage>
</organism>
<gene>
    <name evidence="3" type="primary">MYOCOS</name>
</gene>
<protein>
    <recommendedName>
        <fullName evidence="2">Myocilin opposite strand protein</fullName>
    </recommendedName>
</protein>
<keyword id="KW-1267">Proteomics identification</keyword>
<keyword id="KW-1185">Reference proteome</keyword>
<reference key="1">
    <citation type="journal article" date="2006" name="Nature">
        <title>The DNA sequence and biological annotation of human chromosome 1.</title>
        <authorList>
            <person name="Gregory S.G."/>
            <person name="Barlow K.F."/>
            <person name="McLay K.E."/>
            <person name="Kaul R."/>
            <person name="Swarbreck D."/>
            <person name="Dunham A."/>
            <person name="Scott C.E."/>
            <person name="Howe K.L."/>
            <person name="Woodfine K."/>
            <person name="Spencer C.C.A."/>
            <person name="Jones M.C."/>
            <person name="Gillson C."/>
            <person name="Searle S."/>
            <person name="Zhou Y."/>
            <person name="Kokocinski F."/>
            <person name="McDonald L."/>
            <person name="Evans R."/>
            <person name="Phillips K."/>
            <person name="Atkinson A."/>
            <person name="Cooper R."/>
            <person name="Jones C."/>
            <person name="Hall R.E."/>
            <person name="Andrews T.D."/>
            <person name="Lloyd C."/>
            <person name="Ainscough R."/>
            <person name="Almeida J.P."/>
            <person name="Ambrose K.D."/>
            <person name="Anderson F."/>
            <person name="Andrew R.W."/>
            <person name="Ashwell R.I.S."/>
            <person name="Aubin K."/>
            <person name="Babbage A.K."/>
            <person name="Bagguley C.L."/>
            <person name="Bailey J."/>
            <person name="Beasley H."/>
            <person name="Bethel G."/>
            <person name="Bird C.P."/>
            <person name="Bray-Allen S."/>
            <person name="Brown J.Y."/>
            <person name="Brown A.J."/>
            <person name="Buckley D."/>
            <person name="Burton J."/>
            <person name="Bye J."/>
            <person name="Carder C."/>
            <person name="Chapman J.C."/>
            <person name="Clark S.Y."/>
            <person name="Clarke G."/>
            <person name="Clee C."/>
            <person name="Cobley V."/>
            <person name="Collier R.E."/>
            <person name="Corby N."/>
            <person name="Coville G.J."/>
            <person name="Davies J."/>
            <person name="Deadman R."/>
            <person name="Dunn M."/>
            <person name="Earthrowl M."/>
            <person name="Ellington A.G."/>
            <person name="Errington H."/>
            <person name="Frankish A."/>
            <person name="Frankland J."/>
            <person name="French L."/>
            <person name="Garner P."/>
            <person name="Garnett J."/>
            <person name="Gay L."/>
            <person name="Ghori M.R.J."/>
            <person name="Gibson R."/>
            <person name="Gilby L.M."/>
            <person name="Gillett W."/>
            <person name="Glithero R.J."/>
            <person name="Grafham D.V."/>
            <person name="Griffiths C."/>
            <person name="Griffiths-Jones S."/>
            <person name="Grocock R."/>
            <person name="Hammond S."/>
            <person name="Harrison E.S.I."/>
            <person name="Hart E."/>
            <person name="Haugen E."/>
            <person name="Heath P.D."/>
            <person name="Holmes S."/>
            <person name="Holt K."/>
            <person name="Howden P.J."/>
            <person name="Hunt A.R."/>
            <person name="Hunt S.E."/>
            <person name="Hunter G."/>
            <person name="Isherwood J."/>
            <person name="James R."/>
            <person name="Johnson C."/>
            <person name="Johnson D."/>
            <person name="Joy A."/>
            <person name="Kay M."/>
            <person name="Kershaw J.K."/>
            <person name="Kibukawa M."/>
            <person name="Kimberley A.M."/>
            <person name="King A."/>
            <person name="Knights A.J."/>
            <person name="Lad H."/>
            <person name="Laird G."/>
            <person name="Lawlor S."/>
            <person name="Leongamornlert D.A."/>
            <person name="Lloyd D.M."/>
            <person name="Loveland J."/>
            <person name="Lovell J."/>
            <person name="Lush M.J."/>
            <person name="Lyne R."/>
            <person name="Martin S."/>
            <person name="Mashreghi-Mohammadi M."/>
            <person name="Matthews L."/>
            <person name="Matthews N.S.W."/>
            <person name="McLaren S."/>
            <person name="Milne S."/>
            <person name="Mistry S."/>
            <person name="Moore M.J.F."/>
            <person name="Nickerson T."/>
            <person name="O'Dell C.N."/>
            <person name="Oliver K."/>
            <person name="Palmeiri A."/>
            <person name="Palmer S.A."/>
            <person name="Parker A."/>
            <person name="Patel D."/>
            <person name="Pearce A.V."/>
            <person name="Peck A.I."/>
            <person name="Pelan S."/>
            <person name="Phelps K."/>
            <person name="Phillimore B.J."/>
            <person name="Plumb R."/>
            <person name="Rajan J."/>
            <person name="Raymond C."/>
            <person name="Rouse G."/>
            <person name="Saenphimmachak C."/>
            <person name="Sehra H.K."/>
            <person name="Sheridan E."/>
            <person name="Shownkeen R."/>
            <person name="Sims S."/>
            <person name="Skuce C.D."/>
            <person name="Smith M."/>
            <person name="Steward C."/>
            <person name="Subramanian S."/>
            <person name="Sycamore N."/>
            <person name="Tracey A."/>
            <person name="Tromans A."/>
            <person name="Van Helmond Z."/>
            <person name="Wall M."/>
            <person name="Wallis J.M."/>
            <person name="White S."/>
            <person name="Whitehead S.L."/>
            <person name="Wilkinson J.E."/>
            <person name="Willey D.L."/>
            <person name="Williams H."/>
            <person name="Wilming L."/>
            <person name="Wray P.W."/>
            <person name="Wu Z."/>
            <person name="Coulson A."/>
            <person name="Vaudin M."/>
            <person name="Sulston J.E."/>
            <person name="Durbin R.M."/>
            <person name="Hubbard T."/>
            <person name="Wooster R."/>
            <person name="Dunham I."/>
            <person name="Carter N.P."/>
            <person name="McVean G."/>
            <person name="Ross M.T."/>
            <person name="Harrow J."/>
            <person name="Olson M.V."/>
            <person name="Beck S."/>
            <person name="Rogers J."/>
            <person name="Bentley D.R."/>
        </authorList>
    </citation>
    <scope>NUCLEOTIDE SEQUENCE [LARGE SCALE GENOMIC DNA]</scope>
</reference>
<evidence type="ECO:0000256" key="1">
    <source>
        <dbReference type="SAM" id="MobiDB-lite"/>
    </source>
</evidence>
<evidence type="ECO:0000305" key="2"/>
<evidence type="ECO:0000312" key="3">
    <source>
        <dbReference type="HGNC" id="HGNC:53429"/>
    </source>
</evidence>
<name>MYCOS_HUMAN</name>
<proteinExistence type="evidence at protein level"/>
<dbReference type="EMBL" id="Z98750">
    <property type="status" value="NOT_ANNOTATED_CDS"/>
    <property type="molecule type" value="Genomic_DNA"/>
</dbReference>
<dbReference type="CCDS" id="CCDS91106.1"/>
<dbReference type="RefSeq" id="NP_001355093.1">
    <property type="nucleotide sequence ID" value="NM_001368164.1"/>
</dbReference>
<dbReference type="RefSeq" id="NP_001378869.1">
    <property type="nucleotide sequence ID" value="NM_001391940.1"/>
</dbReference>
<dbReference type="RefSeq" id="XP_047298383.1">
    <property type="nucleotide sequence ID" value="XM_047442427.1"/>
</dbReference>
<dbReference type="RefSeq" id="XP_047298419.1">
    <property type="nucleotide sequence ID" value="XM_047442463.1"/>
</dbReference>
<dbReference type="RefSeq" id="XP_054189945.1">
    <property type="nucleotide sequence ID" value="XM_054333970.1"/>
</dbReference>
<dbReference type="RefSeq" id="XP_054189946.1">
    <property type="nucleotide sequence ID" value="XM_054333971.1"/>
</dbReference>
<dbReference type="SMR" id="A0A1B0GUC4"/>
<dbReference type="BioMuta" id="MYOCOS"/>
<dbReference type="MassIVE" id="A0A1B0GUC4"/>
<dbReference type="PeptideAtlas" id="A0A1B0GUC4"/>
<dbReference type="Ensembl" id="ENST00000636697.1">
    <property type="protein sequence ID" value="ENSP00000489662.1"/>
    <property type="gene ID" value="ENSG00000283683.2"/>
</dbReference>
<dbReference type="Ensembl" id="ENST00000636788.1">
    <property type="protein sequence ID" value="ENSP00000490102.1"/>
    <property type="gene ID" value="ENSG00000283683.2"/>
</dbReference>
<dbReference type="Ensembl" id="ENST00000637642.2">
    <property type="protein sequence ID" value="ENSP00000490820.1"/>
    <property type="gene ID" value="ENSG00000283683.2"/>
</dbReference>
<dbReference type="Ensembl" id="ENST00000686330.1">
    <property type="protein sequence ID" value="ENSP00000510061.1"/>
    <property type="gene ID" value="ENSG00000283683.2"/>
</dbReference>
<dbReference type="GeneID" id="110806290"/>
<dbReference type="MANE-Select" id="ENST00000637642.2">
    <property type="protein sequence ID" value="ENSP00000490820.1"/>
    <property type="RefSeq nucleotide sequence ID" value="NM_001391940.1"/>
    <property type="RefSeq protein sequence ID" value="NP_001378869.1"/>
</dbReference>
<dbReference type="AGR" id="HGNC:53429"/>
<dbReference type="GeneCards" id="MYOCOS"/>
<dbReference type="HGNC" id="HGNC:53429">
    <property type="gene designation" value="MYOCOS"/>
</dbReference>
<dbReference type="HPA" id="ENSG00000283683">
    <property type="expression patterns" value="Tissue enhanced (cervix, epididymis)"/>
</dbReference>
<dbReference type="neXtProt" id="NX_A0A1B0GUC4"/>
<dbReference type="VEuPathDB" id="HostDB:ENSG00000283683"/>
<dbReference type="GeneTree" id="ENSGT01050000245064"/>
<dbReference type="InParanoid" id="A0A1B0GUC4"/>
<dbReference type="OrthoDB" id="9634327at2759"/>
<dbReference type="PAN-GO" id="A0A1B0GUC4">
    <property type="GO annotations" value="0 GO annotations based on evolutionary models"/>
</dbReference>
<dbReference type="Pharos" id="A0A1B0GUC4">
    <property type="development level" value="Tdark"/>
</dbReference>
<dbReference type="PRO" id="PR:A0A1B0GUC4"/>
<dbReference type="Proteomes" id="UP000005640">
    <property type="component" value="Chromosome 1"/>
</dbReference>
<dbReference type="RNAct" id="A0A1B0GUC4">
    <property type="molecule type" value="protein"/>
</dbReference>
<dbReference type="Bgee" id="ENSG00000283683">
    <property type="expression patterns" value="Expressed in male germ line stem cell (sensu Vertebrata) in testis and 48 other cell types or tissues"/>
</dbReference>
<dbReference type="ExpressionAtlas" id="A0A1B0GUC4">
    <property type="expression patterns" value="baseline and differential"/>
</dbReference>